<evidence type="ECO:0000250" key="1">
    <source>
        <dbReference type="UniProtKB" id="P9WPG5"/>
    </source>
</evidence>
<evidence type="ECO:0000255" key="2"/>
<evidence type="ECO:0000305" key="3"/>
<evidence type="ECO:0000312" key="4">
    <source>
        <dbReference type="EMBL" id="SIU00457.1"/>
    </source>
</evidence>
<accession>P63754</accession>
<accession>A0A1R3XZS5</accession>
<accession>Q50611</accession>
<accession>X2BIK7</accession>
<gene>
    <name evidence="4" type="primary">pgsA2</name>
    <name type="ordered locus">BQ2027_MB1853</name>
</gene>
<name>CRLS_MYCBO</name>
<dbReference type="EC" id="2.7.8.41" evidence="1"/>
<dbReference type="EMBL" id="LT708304">
    <property type="protein sequence ID" value="SIU00457.1"/>
    <property type="molecule type" value="Genomic_DNA"/>
</dbReference>
<dbReference type="RefSeq" id="NP_855505.1">
    <property type="nucleotide sequence ID" value="NC_002945.3"/>
</dbReference>
<dbReference type="RefSeq" id="WP_003409227.1">
    <property type="nucleotide sequence ID" value="NC_002945.4"/>
</dbReference>
<dbReference type="SMR" id="P63754"/>
<dbReference type="KEGG" id="mbo:BQ2027_MB1853"/>
<dbReference type="PATRIC" id="fig|233413.5.peg.2033"/>
<dbReference type="UniPathway" id="UPA00085"/>
<dbReference type="Proteomes" id="UP000001419">
    <property type="component" value="Chromosome"/>
</dbReference>
<dbReference type="GO" id="GO:0005886">
    <property type="term" value="C:plasma membrane"/>
    <property type="evidence" value="ECO:0007669"/>
    <property type="project" value="UniProtKB-SubCell"/>
</dbReference>
<dbReference type="GO" id="GO:0043337">
    <property type="term" value="F:cardiolipin synthase (CMP-forming)"/>
    <property type="evidence" value="ECO:0007669"/>
    <property type="project" value="UniProtKB-EC"/>
</dbReference>
<dbReference type="GO" id="GO:0008444">
    <property type="term" value="F:CDP-diacylglycerol-glycerol-3-phosphate 3-phosphatidyltransferase activity"/>
    <property type="evidence" value="ECO:0007669"/>
    <property type="project" value="InterPro"/>
</dbReference>
<dbReference type="GO" id="GO:0046474">
    <property type="term" value="P:glycerophospholipid biosynthetic process"/>
    <property type="evidence" value="ECO:0007669"/>
    <property type="project" value="TreeGrafter"/>
</dbReference>
<dbReference type="Gene3D" id="1.20.120.1760">
    <property type="match status" value="1"/>
</dbReference>
<dbReference type="InterPro" id="IPR050324">
    <property type="entry name" value="CDP-alcohol_PTase-I"/>
</dbReference>
<dbReference type="InterPro" id="IPR000462">
    <property type="entry name" value="CDP-OH_P_trans"/>
</dbReference>
<dbReference type="InterPro" id="IPR043130">
    <property type="entry name" value="CDP-OH_PTrfase_TM_dom"/>
</dbReference>
<dbReference type="InterPro" id="IPR048254">
    <property type="entry name" value="CDP_ALCOHOL_P_TRANSF_CS"/>
</dbReference>
<dbReference type="InterPro" id="IPR004570">
    <property type="entry name" value="Phosphatidylglycerol_P_synth"/>
</dbReference>
<dbReference type="PANTHER" id="PTHR14269:SF62">
    <property type="entry name" value="CDP-DIACYLGLYCEROL--GLYCEROL-3-PHOSPHATE 3-PHOSPHATIDYLTRANSFERASE 1, CHLOROPLASTIC"/>
    <property type="match status" value="1"/>
</dbReference>
<dbReference type="PANTHER" id="PTHR14269">
    <property type="entry name" value="CDP-DIACYLGLYCEROL--GLYCEROL-3-PHOSPHATE 3-PHOSPHATIDYLTRANSFERASE-RELATED"/>
    <property type="match status" value="1"/>
</dbReference>
<dbReference type="Pfam" id="PF01066">
    <property type="entry name" value="CDP-OH_P_transf"/>
    <property type="match status" value="1"/>
</dbReference>
<dbReference type="PIRSF" id="PIRSF000847">
    <property type="entry name" value="Phos_ph_gly_syn"/>
    <property type="match status" value="1"/>
</dbReference>
<dbReference type="PROSITE" id="PS00379">
    <property type="entry name" value="CDP_ALCOHOL_P_TRANSF"/>
    <property type="match status" value="1"/>
</dbReference>
<sequence>MEPVLTQNRVLTVPNMLSVIRLALIPAFVYVVLSAHANGWGVAILVFSGVSDWADGKIARLLNQSSRLGALLDPAVDRLYMVTVPIVFGLSGIVPWWFVLTLLTRDALLAGTLPLLWSRGLSALPVTYVGKAATFGFMVGFPTILLGQCDPLWSHVLLACGWAFLIWGMYAYLWAFVLYAVQMTMVVRQMPKLKGRAHRPAAQNAGERG</sequence>
<reference key="1">
    <citation type="journal article" date="2003" name="Proc. Natl. Acad. Sci. U.S.A.">
        <title>The complete genome sequence of Mycobacterium bovis.</title>
        <authorList>
            <person name="Garnier T."/>
            <person name="Eiglmeier K."/>
            <person name="Camus J.-C."/>
            <person name="Medina N."/>
            <person name="Mansoor H."/>
            <person name="Pryor M."/>
            <person name="Duthoy S."/>
            <person name="Grondin S."/>
            <person name="Lacroix C."/>
            <person name="Monsempe C."/>
            <person name="Simon S."/>
            <person name="Harris B."/>
            <person name="Atkin R."/>
            <person name="Doggett J."/>
            <person name="Mayes R."/>
            <person name="Keating L."/>
            <person name="Wheeler P.R."/>
            <person name="Parkhill J."/>
            <person name="Barrell B.G."/>
            <person name="Cole S.T."/>
            <person name="Gordon S.V."/>
            <person name="Hewinson R.G."/>
        </authorList>
    </citation>
    <scope>NUCLEOTIDE SEQUENCE [LARGE SCALE GENOMIC DNA]</scope>
    <source>
        <strain>ATCC BAA-935 / AF2122/97</strain>
    </source>
</reference>
<reference key="2">
    <citation type="journal article" date="2017" name="Genome Announc.">
        <title>Updated reference genome sequence and annotation of Mycobacterium bovis AF2122/97.</title>
        <authorList>
            <person name="Malone K.M."/>
            <person name="Farrell D."/>
            <person name="Stuber T.P."/>
            <person name="Schubert O.T."/>
            <person name="Aebersold R."/>
            <person name="Robbe-Austerman S."/>
            <person name="Gordon S.V."/>
        </authorList>
    </citation>
    <scope>NUCLEOTIDE SEQUENCE [LARGE SCALE GENOMIC DNA]</scope>
    <scope>GENOME REANNOTATION</scope>
    <source>
        <strain>ATCC BAA-935 / AF2122/97</strain>
    </source>
</reference>
<keyword id="KW-1003">Cell membrane</keyword>
<keyword id="KW-0444">Lipid biosynthesis</keyword>
<keyword id="KW-0443">Lipid metabolism</keyword>
<keyword id="KW-0472">Membrane</keyword>
<keyword id="KW-0594">Phospholipid biosynthesis</keyword>
<keyword id="KW-1208">Phospholipid metabolism</keyword>
<keyword id="KW-1185">Reference proteome</keyword>
<keyword id="KW-0808">Transferase</keyword>
<keyword id="KW-0812">Transmembrane</keyword>
<keyword id="KW-1133">Transmembrane helix</keyword>
<feature type="chain" id="PRO_0000056780" description="Putative cardiolipin synthase">
    <location>
        <begin position="1"/>
        <end position="209"/>
    </location>
</feature>
<feature type="transmembrane region" description="Helical" evidence="2">
    <location>
        <begin position="27"/>
        <end position="47"/>
    </location>
</feature>
<feature type="transmembrane region" description="Helical" evidence="2">
    <location>
        <begin position="82"/>
        <end position="102"/>
    </location>
</feature>
<feature type="transmembrane region" description="Helical" evidence="2">
    <location>
        <begin position="126"/>
        <end position="146"/>
    </location>
</feature>
<feature type="transmembrane region" description="Helical" evidence="2">
    <location>
        <begin position="157"/>
        <end position="177"/>
    </location>
</feature>
<organism>
    <name type="scientific">Mycobacterium bovis (strain ATCC BAA-935 / AF2122/97)</name>
    <dbReference type="NCBI Taxonomy" id="233413"/>
    <lineage>
        <taxon>Bacteria</taxon>
        <taxon>Bacillati</taxon>
        <taxon>Actinomycetota</taxon>
        <taxon>Actinomycetes</taxon>
        <taxon>Mycobacteriales</taxon>
        <taxon>Mycobacteriaceae</taxon>
        <taxon>Mycobacterium</taxon>
        <taxon>Mycobacterium tuberculosis complex</taxon>
    </lineage>
</organism>
<comment type="function">
    <text evidence="1">May catalyze the biosynthesis of cardiolipin from phosphatidylglycerol (PG) and CDP-diacylglycerol.</text>
</comment>
<comment type="catalytic activity">
    <reaction evidence="1">
        <text>a CDP-1,2-diacyl-sn-glycerol + a 1,2-diacyl-sn-glycero-3-phospho-(1'-sn-glycerol) = a cardiolipin + CMP + H(+)</text>
        <dbReference type="Rhea" id="RHEA:32931"/>
        <dbReference type="ChEBI" id="CHEBI:15378"/>
        <dbReference type="ChEBI" id="CHEBI:58332"/>
        <dbReference type="ChEBI" id="CHEBI:60377"/>
        <dbReference type="ChEBI" id="CHEBI:62237"/>
        <dbReference type="ChEBI" id="CHEBI:64716"/>
        <dbReference type="EC" id="2.7.8.41"/>
    </reaction>
</comment>
<comment type="pathway">
    <text evidence="1">Lipid metabolism; phospholipid metabolism.</text>
</comment>
<comment type="subcellular location">
    <subcellularLocation>
        <location evidence="3">Cell membrane</location>
        <topology evidence="3">Multi-pass membrane protein</topology>
    </subcellularLocation>
</comment>
<comment type="similarity">
    <text evidence="3">Belongs to the CDP-alcohol phosphatidyltransferase class-I family.</text>
</comment>
<proteinExistence type="inferred from homology"/>
<protein>
    <recommendedName>
        <fullName evidence="1">Putative cardiolipin synthase</fullName>
        <ecNumber evidence="1">2.7.8.41</ecNumber>
    </recommendedName>
</protein>